<sequence>MKNVLPPFIEIYRALIATPSISATEESLDQSNASLITLLAGWFSDLGFNVEVQPVPGTRNKFNMLASTGHGAGGLLLTGHTDTVPFDDGRWTRDPFTLTEHDNKLYGLGTADMKGFFAFILDALRDVDVTKLKKPLYILATADEETSMAGARYFSETTALRPDCAIIGEPTSLQPIRAHKGHISNVVRVLGQSGHSSDPARGVNAIELMHDAIGHIMQLRDSLKARYHYEAFTVPYPTLNLGHIHGGDASNRICACCELHMDIRPLPGMTLNDLNGLLNDALAPVSERWPGRLTVAELHPPIPGYECPPDHQLVEVVEKLLGTKTDVVNYCTEAPFMQTLCPTLVLGPGSINQAHQPDEYLETRFIKPTRELITQVVHHFCWH</sequence>
<accession>B5QXQ2</accession>
<proteinExistence type="inferred from homology"/>
<name>ARGE_SALEP</name>
<gene>
    <name evidence="1" type="primary">argE</name>
    <name type="ordered locus">SEN3915</name>
</gene>
<organism>
    <name type="scientific">Salmonella enteritidis PT4 (strain P125109)</name>
    <dbReference type="NCBI Taxonomy" id="550537"/>
    <lineage>
        <taxon>Bacteria</taxon>
        <taxon>Pseudomonadati</taxon>
        <taxon>Pseudomonadota</taxon>
        <taxon>Gammaproteobacteria</taxon>
        <taxon>Enterobacterales</taxon>
        <taxon>Enterobacteriaceae</taxon>
        <taxon>Salmonella</taxon>
    </lineage>
</organism>
<protein>
    <recommendedName>
        <fullName evidence="1">Acetylornithine deacetylase</fullName>
        <shortName evidence="1">AO</shortName>
        <shortName evidence="1">Acetylornithinase</shortName>
        <ecNumber evidence="1">3.5.1.16</ecNumber>
    </recommendedName>
    <alternativeName>
        <fullName evidence="1">N-acetylornithinase</fullName>
        <shortName evidence="1">NAO</shortName>
    </alternativeName>
</protein>
<dbReference type="EC" id="3.5.1.16" evidence="1"/>
<dbReference type="EMBL" id="AM933172">
    <property type="protein sequence ID" value="CAR35487.1"/>
    <property type="molecule type" value="Genomic_DNA"/>
</dbReference>
<dbReference type="RefSeq" id="WP_000800208.1">
    <property type="nucleotide sequence ID" value="NC_011294.1"/>
</dbReference>
<dbReference type="SMR" id="B5QXQ2"/>
<dbReference type="KEGG" id="set:SEN3915"/>
<dbReference type="HOGENOM" id="CLU_021802_2_4_6"/>
<dbReference type="UniPathway" id="UPA00068">
    <property type="reaction ID" value="UER00110"/>
</dbReference>
<dbReference type="Proteomes" id="UP000000613">
    <property type="component" value="Chromosome"/>
</dbReference>
<dbReference type="GO" id="GO:0005737">
    <property type="term" value="C:cytoplasm"/>
    <property type="evidence" value="ECO:0007669"/>
    <property type="project" value="UniProtKB-SubCell"/>
</dbReference>
<dbReference type="GO" id="GO:0008777">
    <property type="term" value="F:acetylornithine deacetylase activity"/>
    <property type="evidence" value="ECO:0007669"/>
    <property type="project" value="UniProtKB-UniRule"/>
</dbReference>
<dbReference type="GO" id="GO:0008270">
    <property type="term" value="F:zinc ion binding"/>
    <property type="evidence" value="ECO:0007669"/>
    <property type="project" value="UniProtKB-UniRule"/>
</dbReference>
<dbReference type="GO" id="GO:0006526">
    <property type="term" value="P:L-arginine biosynthetic process"/>
    <property type="evidence" value="ECO:0007669"/>
    <property type="project" value="UniProtKB-UniRule"/>
</dbReference>
<dbReference type="CDD" id="cd03894">
    <property type="entry name" value="M20_ArgE"/>
    <property type="match status" value="1"/>
</dbReference>
<dbReference type="FunFam" id="3.30.70.360:FF:000003">
    <property type="entry name" value="Acetylornithine deacetylase"/>
    <property type="match status" value="1"/>
</dbReference>
<dbReference type="Gene3D" id="3.30.70.360">
    <property type="match status" value="1"/>
</dbReference>
<dbReference type="Gene3D" id="3.40.630.10">
    <property type="entry name" value="Zn peptidases"/>
    <property type="match status" value="1"/>
</dbReference>
<dbReference type="HAMAP" id="MF_01108">
    <property type="entry name" value="ArgE"/>
    <property type="match status" value="1"/>
</dbReference>
<dbReference type="InterPro" id="IPR010169">
    <property type="entry name" value="AcOrn-deacetyl"/>
</dbReference>
<dbReference type="InterPro" id="IPR001261">
    <property type="entry name" value="ArgE/DapE_CS"/>
</dbReference>
<dbReference type="InterPro" id="IPR036264">
    <property type="entry name" value="Bact_exopeptidase_dim_dom"/>
</dbReference>
<dbReference type="InterPro" id="IPR002933">
    <property type="entry name" value="Peptidase_M20"/>
</dbReference>
<dbReference type="InterPro" id="IPR011650">
    <property type="entry name" value="Peptidase_M20_dimer"/>
</dbReference>
<dbReference type="InterPro" id="IPR050072">
    <property type="entry name" value="Peptidase_M20A"/>
</dbReference>
<dbReference type="NCBIfam" id="TIGR01892">
    <property type="entry name" value="AcOrn-deacetyl"/>
    <property type="match status" value="1"/>
</dbReference>
<dbReference type="NCBIfam" id="NF003474">
    <property type="entry name" value="PRK05111.1"/>
    <property type="match status" value="1"/>
</dbReference>
<dbReference type="PANTHER" id="PTHR43808">
    <property type="entry name" value="ACETYLORNITHINE DEACETYLASE"/>
    <property type="match status" value="1"/>
</dbReference>
<dbReference type="PANTHER" id="PTHR43808:SF1">
    <property type="entry name" value="ACETYLORNITHINE DEACETYLASE"/>
    <property type="match status" value="1"/>
</dbReference>
<dbReference type="Pfam" id="PF07687">
    <property type="entry name" value="M20_dimer"/>
    <property type="match status" value="1"/>
</dbReference>
<dbReference type="Pfam" id="PF01546">
    <property type="entry name" value="Peptidase_M20"/>
    <property type="match status" value="1"/>
</dbReference>
<dbReference type="SUPFAM" id="SSF55031">
    <property type="entry name" value="Bacterial exopeptidase dimerisation domain"/>
    <property type="match status" value="1"/>
</dbReference>
<dbReference type="SUPFAM" id="SSF53187">
    <property type="entry name" value="Zn-dependent exopeptidases"/>
    <property type="match status" value="1"/>
</dbReference>
<dbReference type="PROSITE" id="PS00758">
    <property type="entry name" value="ARGE_DAPE_CPG2_1"/>
    <property type="match status" value="1"/>
</dbReference>
<dbReference type="PROSITE" id="PS00759">
    <property type="entry name" value="ARGE_DAPE_CPG2_2"/>
    <property type="match status" value="1"/>
</dbReference>
<feature type="chain" id="PRO_1000137075" description="Acetylornithine deacetylase">
    <location>
        <begin position="1"/>
        <end position="383"/>
    </location>
</feature>
<feature type="active site" evidence="1">
    <location>
        <position position="82"/>
    </location>
</feature>
<feature type="active site" evidence="1">
    <location>
        <position position="144"/>
    </location>
</feature>
<feature type="binding site" evidence="1">
    <location>
        <position position="80"/>
    </location>
    <ligand>
        <name>Zn(2+)</name>
        <dbReference type="ChEBI" id="CHEBI:29105"/>
        <label>1</label>
    </ligand>
</feature>
<feature type="binding site" evidence="1">
    <location>
        <position position="112"/>
    </location>
    <ligand>
        <name>Zn(2+)</name>
        <dbReference type="ChEBI" id="CHEBI:29105"/>
        <label>1</label>
    </ligand>
</feature>
<feature type="binding site" evidence="1">
    <location>
        <position position="112"/>
    </location>
    <ligand>
        <name>Zn(2+)</name>
        <dbReference type="ChEBI" id="CHEBI:29105"/>
        <label>2</label>
    </ligand>
</feature>
<feature type="binding site" evidence="1">
    <location>
        <position position="145"/>
    </location>
    <ligand>
        <name>Zn(2+)</name>
        <dbReference type="ChEBI" id="CHEBI:29105"/>
        <label>2</label>
    </ligand>
</feature>
<feature type="binding site" evidence="1">
    <location>
        <position position="169"/>
    </location>
    <ligand>
        <name>Zn(2+)</name>
        <dbReference type="ChEBI" id="CHEBI:29105"/>
        <label>1</label>
    </ligand>
</feature>
<feature type="binding site" evidence="1">
    <location>
        <position position="355"/>
    </location>
    <ligand>
        <name>Zn(2+)</name>
        <dbReference type="ChEBI" id="CHEBI:29105"/>
        <label>2</label>
    </ligand>
</feature>
<evidence type="ECO:0000255" key="1">
    <source>
        <dbReference type="HAMAP-Rule" id="MF_01108"/>
    </source>
</evidence>
<comment type="function">
    <text evidence="1">Catalyzes the hydrolysis of the amide bond of N(2)-acetylated L-amino acids. Cleaves the acetyl group from N-acetyl-L-ornithine to form L-ornithine, an intermediate in L-arginine biosynthesis pathway, and a branchpoint in the synthesis of polyamines.</text>
</comment>
<comment type="catalytic activity">
    <reaction evidence="1">
        <text>N(2)-acetyl-L-ornithine + H2O = L-ornithine + acetate</text>
        <dbReference type="Rhea" id="RHEA:15941"/>
        <dbReference type="ChEBI" id="CHEBI:15377"/>
        <dbReference type="ChEBI" id="CHEBI:30089"/>
        <dbReference type="ChEBI" id="CHEBI:46911"/>
        <dbReference type="ChEBI" id="CHEBI:57805"/>
        <dbReference type="EC" id="3.5.1.16"/>
    </reaction>
</comment>
<comment type="cofactor">
    <cofactor evidence="1">
        <name>Zn(2+)</name>
        <dbReference type="ChEBI" id="CHEBI:29105"/>
    </cofactor>
    <cofactor evidence="1">
        <name>Co(2+)</name>
        <dbReference type="ChEBI" id="CHEBI:48828"/>
    </cofactor>
    <text evidence="1">Binds 2 Zn(2+) or Co(2+) ions per subunit.</text>
</comment>
<comment type="cofactor">
    <cofactor evidence="1">
        <name>glutathione</name>
        <dbReference type="ChEBI" id="CHEBI:57925"/>
    </cofactor>
</comment>
<comment type="pathway">
    <text evidence="1">Amino-acid biosynthesis; L-arginine biosynthesis; L-ornithine from N(2)-acetyl-L-ornithine (linear): step 1/1.</text>
</comment>
<comment type="subunit">
    <text evidence="1">Homodimer.</text>
</comment>
<comment type="subcellular location">
    <subcellularLocation>
        <location evidence="1">Cytoplasm</location>
    </subcellularLocation>
</comment>
<comment type="similarity">
    <text evidence="1">Belongs to the peptidase M20A family. ArgE subfamily.</text>
</comment>
<reference key="1">
    <citation type="journal article" date="2008" name="Genome Res.">
        <title>Comparative genome analysis of Salmonella enteritidis PT4 and Salmonella gallinarum 287/91 provides insights into evolutionary and host adaptation pathways.</title>
        <authorList>
            <person name="Thomson N.R."/>
            <person name="Clayton D.J."/>
            <person name="Windhorst D."/>
            <person name="Vernikos G."/>
            <person name="Davidson S."/>
            <person name="Churcher C."/>
            <person name="Quail M.A."/>
            <person name="Stevens M."/>
            <person name="Jones M.A."/>
            <person name="Watson M."/>
            <person name="Barron A."/>
            <person name="Layton A."/>
            <person name="Pickard D."/>
            <person name="Kingsley R.A."/>
            <person name="Bignell A."/>
            <person name="Clark L."/>
            <person name="Harris B."/>
            <person name="Ormond D."/>
            <person name="Abdellah Z."/>
            <person name="Brooks K."/>
            <person name="Cherevach I."/>
            <person name="Chillingworth T."/>
            <person name="Woodward J."/>
            <person name="Norberczak H."/>
            <person name="Lord A."/>
            <person name="Arrowsmith C."/>
            <person name="Jagels K."/>
            <person name="Moule S."/>
            <person name="Mungall K."/>
            <person name="Saunders M."/>
            <person name="Whitehead S."/>
            <person name="Chabalgoity J.A."/>
            <person name="Maskell D."/>
            <person name="Humphreys T."/>
            <person name="Roberts M."/>
            <person name="Barrow P.A."/>
            <person name="Dougan G."/>
            <person name="Parkhill J."/>
        </authorList>
    </citation>
    <scope>NUCLEOTIDE SEQUENCE [LARGE SCALE GENOMIC DNA]</scope>
    <source>
        <strain>P125109</strain>
    </source>
</reference>
<keyword id="KW-0028">Amino-acid biosynthesis</keyword>
<keyword id="KW-0055">Arginine biosynthesis</keyword>
<keyword id="KW-0170">Cobalt</keyword>
<keyword id="KW-0963">Cytoplasm</keyword>
<keyword id="KW-0378">Hydrolase</keyword>
<keyword id="KW-0479">Metal-binding</keyword>
<keyword id="KW-0862">Zinc</keyword>